<gene>
    <name type="primary">DPM1</name>
</gene>
<comment type="function">
    <text evidence="4">Transfers mannose from GDP-mannose to dolichol monophosphate to form dolichol phosphate mannose (Dol-P-Man) which is the mannosyl donor in pathways leading to N-glycosylation, glycosyl phosphatidylinositol membrane anchoring, and O-mannosylation of proteins; catalytic subunit of the dolichol-phosphate mannose (DPM) synthase complex.</text>
</comment>
<comment type="catalytic activity">
    <reaction evidence="10">
        <text>a di-trans,poly-cis-dolichyl phosphate + GDP-alpha-D-mannose = a di-trans,poly-cis-dolichyl beta-D-mannosyl phosphate + GDP</text>
        <dbReference type="Rhea" id="RHEA:21184"/>
        <dbReference type="Rhea" id="RHEA-COMP:19498"/>
        <dbReference type="Rhea" id="RHEA-COMP:19501"/>
        <dbReference type="ChEBI" id="CHEBI:57527"/>
        <dbReference type="ChEBI" id="CHEBI:57683"/>
        <dbReference type="ChEBI" id="CHEBI:58189"/>
        <dbReference type="ChEBI" id="CHEBI:58211"/>
        <dbReference type="EC" id="2.4.1.83"/>
    </reaction>
    <physiologicalReaction direction="left-to-right" evidence="10">
        <dbReference type="Rhea" id="RHEA:21185"/>
    </physiologicalReaction>
</comment>
<comment type="cofactor">
    <cofactor evidence="1">
        <name>Mg(2+)</name>
        <dbReference type="ChEBI" id="CHEBI:18420"/>
    </cofactor>
    <cofactor evidence="1">
        <name>Mn(2+)</name>
        <dbReference type="ChEBI" id="CHEBI:29035"/>
    </cofactor>
    <cofactor evidence="1">
        <name>Ca(2+)</name>
        <dbReference type="ChEBI" id="CHEBI:29108"/>
    </cofactor>
    <text evidence="1">Binds 1 divalent metal cation.</text>
</comment>
<comment type="pathway">
    <text evidence="10">Protein modification; protein glycosylation.</text>
</comment>
<comment type="subunit">
    <text evidence="4 6 7">Component of the dolichol-phosphate mannose (DPM) synthase complex composed of DPM1, DPM2 and DPM3; within the complex, directly interacts with DPM3 (PubMed:10835346, PubMed:16280320). This interaction stabilizes DPM1 (PubMed:10835346, PubMed:19576565).</text>
</comment>
<comment type="interaction">
    <interactant intactId="EBI-719526">
        <id>O60762</id>
    </interactant>
    <interactant intactId="EBI-9087337">
        <id>Q9P2X0</id>
        <label>DPM3</label>
    </interactant>
    <organismsDiffer>false</organismsDiffer>
    <experiments>5</experiments>
</comment>
<comment type="interaction">
    <interactant intactId="EBI-719526">
        <id>O60762</id>
    </interactant>
    <interactant intactId="EBI-16439278">
        <id>Q6FHY5</id>
        <label>MEOX2</label>
    </interactant>
    <organismsDiffer>false</organismsDiffer>
    <experiments>3</experiments>
</comment>
<comment type="interaction">
    <interactant intactId="EBI-719526">
        <id>O60762</id>
    </interactant>
    <interactant intactId="EBI-743494">
        <id>P48775</id>
        <label>TDO2</label>
    </interactant>
    <organismsDiffer>false</organismsDiffer>
    <experiments>6</experiments>
</comment>
<comment type="subcellular location">
    <subcellularLocation>
        <location evidence="10">Endoplasmic reticulum</location>
    </subcellularLocation>
</comment>
<comment type="disease" evidence="2 3 5 8">
    <disease id="DI-00337">
        <name>Congenital disorder of glycosylation 1E</name>
        <acronym>CDG1E</acronym>
        <description>A form of congenital disorder of glycosylation, a multisystem disorder caused by a defect in glycoprotein biosynthesis and characterized by under-glycosylated serum glycoproteins. Congenital disorders of glycosylation result in a wide variety of clinical features, such as defects in the nervous system development, psychomotor retardation, dysmorphic features, hypotonia, coagulation disorders, and immunodeficiency. The broad spectrum of features reflects the critical role of N-glycoproteins during embryonic development, differentiation, and maintenance of cell functions. Some CDG1E patients have features consistent with a dystroglycanopathy and congenital muscular dystrophy, including O-mannosylation defect, camptodactyly, elevated creatine kinase, motor delay and dystrophic changes on muscel biopsy.</description>
        <dbReference type="MIM" id="608799"/>
    </disease>
    <text>The disease is caused by variants affecting the gene represented in this entry.</text>
</comment>
<comment type="similarity">
    <text evidence="9">Belongs to the glycosyltransferase 2 family.</text>
</comment>
<protein>
    <recommendedName>
        <fullName>Dolichol-phosphate mannosyltransferase subunit 1</fullName>
        <ecNumber evidence="10">2.4.1.83</ecNumber>
    </recommendedName>
    <alternativeName>
        <fullName>Dolichol-phosphate mannose synthase subunit 1</fullName>
        <shortName>DPM synthase subunit 1</shortName>
    </alternativeName>
    <alternativeName>
        <fullName>Dolichyl-phosphate beta-D-mannosyltransferase subunit 1</fullName>
    </alternativeName>
    <alternativeName>
        <fullName>Mannose-P-dolichol synthase subunit 1</fullName>
        <shortName>MPD synthase subunit 1</shortName>
    </alternativeName>
</protein>
<sequence>MASLEVSRSPRRSRRELEVRSPRQNKYSVLLPTYNERENLPLIVWLLVKSFSESGINYEIIIIDDGSPDGTRDVAEQLEKIYGSDRILLRPREKKLGLGTAYIHGMKHATGNYIIIMDADLSHHPKFIPEFIRKQKEGNFDIVSGTRYKGNGGVYGWDLKRKIISRGANFLTQILLRPGASDLTGSFRLYRKEVLEKLIEKCVSKGYVFQMEMIVRARQLNYTIGEVPISFVDRVYGESKLGGNEIVSFLKGLLTLFATT</sequence>
<proteinExistence type="evidence at protein level"/>
<reference key="1">
    <citation type="journal article" date="1998" name="J. Biol. Chem.">
        <title>A homologue of Saccharomyces cerevisiae Dpm1p is not sufficient for synthesis of dolichol-phosphate-mannose in mammalian cells.</title>
        <authorList>
            <person name="Tomita S."/>
            <person name="Inoue N."/>
            <person name="Maeda Y."/>
            <person name="Ohishi K."/>
            <person name="Takeda J."/>
            <person name="Kinoshita T."/>
        </authorList>
    </citation>
    <scope>NUCLEOTIDE SEQUENCE [GENOMIC DNA / MRNA]</scope>
    <source>
        <tissue>Placenta</tissue>
    </source>
</reference>
<reference key="2">
    <citation type="submission" date="2004-06" db="EMBL/GenBank/DDBJ databases">
        <title>Cloning of human full open reading frames in Gateway(TM) system entry vector (pDONR201).</title>
        <authorList>
            <person name="Ebert L."/>
            <person name="Schick M."/>
            <person name="Neubert P."/>
            <person name="Schatten R."/>
            <person name="Henze S."/>
            <person name="Korn B."/>
        </authorList>
    </citation>
    <scope>NUCLEOTIDE SEQUENCE [LARGE SCALE MRNA]</scope>
</reference>
<reference key="3">
    <citation type="journal article" date="2004" name="Nat. Genet.">
        <title>Complete sequencing and characterization of 21,243 full-length human cDNAs.</title>
        <authorList>
            <person name="Ota T."/>
            <person name="Suzuki Y."/>
            <person name="Nishikawa T."/>
            <person name="Otsuki T."/>
            <person name="Sugiyama T."/>
            <person name="Irie R."/>
            <person name="Wakamatsu A."/>
            <person name="Hayashi K."/>
            <person name="Sato H."/>
            <person name="Nagai K."/>
            <person name="Kimura K."/>
            <person name="Makita H."/>
            <person name="Sekine M."/>
            <person name="Obayashi M."/>
            <person name="Nishi T."/>
            <person name="Shibahara T."/>
            <person name="Tanaka T."/>
            <person name="Ishii S."/>
            <person name="Yamamoto J."/>
            <person name="Saito K."/>
            <person name="Kawai Y."/>
            <person name="Isono Y."/>
            <person name="Nakamura Y."/>
            <person name="Nagahari K."/>
            <person name="Murakami K."/>
            <person name="Yasuda T."/>
            <person name="Iwayanagi T."/>
            <person name="Wagatsuma M."/>
            <person name="Shiratori A."/>
            <person name="Sudo H."/>
            <person name="Hosoiri T."/>
            <person name="Kaku Y."/>
            <person name="Kodaira H."/>
            <person name="Kondo H."/>
            <person name="Sugawara M."/>
            <person name="Takahashi M."/>
            <person name="Kanda K."/>
            <person name="Yokoi T."/>
            <person name="Furuya T."/>
            <person name="Kikkawa E."/>
            <person name="Omura Y."/>
            <person name="Abe K."/>
            <person name="Kamihara K."/>
            <person name="Katsuta N."/>
            <person name="Sato K."/>
            <person name="Tanikawa M."/>
            <person name="Yamazaki M."/>
            <person name="Ninomiya K."/>
            <person name="Ishibashi T."/>
            <person name="Yamashita H."/>
            <person name="Murakawa K."/>
            <person name="Fujimori K."/>
            <person name="Tanai H."/>
            <person name="Kimata M."/>
            <person name="Watanabe M."/>
            <person name="Hiraoka S."/>
            <person name="Chiba Y."/>
            <person name="Ishida S."/>
            <person name="Ono Y."/>
            <person name="Takiguchi S."/>
            <person name="Watanabe S."/>
            <person name="Yosida M."/>
            <person name="Hotuta T."/>
            <person name="Kusano J."/>
            <person name="Kanehori K."/>
            <person name="Takahashi-Fujii A."/>
            <person name="Hara H."/>
            <person name="Tanase T.-O."/>
            <person name="Nomura Y."/>
            <person name="Togiya S."/>
            <person name="Komai F."/>
            <person name="Hara R."/>
            <person name="Takeuchi K."/>
            <person name="Arita M."/>
            <person name="Imose N."/>
            <person name="Musashino K."/>
            <person name="Yuuki H."/>
            <person name="Oshima A."/>
            <person name="Sasaki N."/>
            <person name="Aotsuka S."/>
            <person name="Yoshikawa Y."/>
            <person name="Matsunawa H."/>
            <person name="Ichihara T."/>
            <person name="Shiohata N."/>
            <person name="Sano S."/>
            <person name="Moriya S."/>
            <person name="Momiyama H."/>
            <person name="Satoh N."/>
            <person name="Takami S."/>
            <person name="Terashima Y."/>
            <person name="Suzuki O."/>
            <person name="Nakagawa S."/>
            <person name="Senoh A."/>
            <person name="Mizoguchi H."/>
            <person name="Goto Y."/>
            <person name="Shimizu F."/>
            <person name="Wakebe H."/>
            <person name="Hishigaki H."/>
            <person name="Watanabe T."/>
            <person name="Sugiyama A."/>
            <person name="Takemoto M."/>
            <person name="Kawakami B."/>
            <person name="Yamazaki M."/>
            <person name="Watanabe K."/>
            <person name="Kumagai A."/>
            <person name="Itakura S."/>
            <person name="Fukuzumi Y."/>
            <person name="Fujimori Y."/>
            <person name="Komiyama M."/>
            <person name="Tashiro H."/>
            <person name="Tanigami A."/>
            <person name="Fujiwara T."/>
            <person name="Ono T."/>
            <person name="Yamada K."/>
            <person name="Fujii Y."/>
            <person name="Ozaki K."/>
            <person name="Hirao M."/>
            <person name="Ohmori Y."/>
            <person name="Kawabata A."/>
            <person name="Hikiji T."/>
            <person name="Kobatake N."/>
            <person name="Inagaki H."/>
            <person name="Ikema Y."/>
            <person name="Okamoto S."/>
            <person name="Okitani R."/>
            <person name="Kawakami T."/>
            <person name="Noguchi S."/>
            <person name="Itoh T."/>
            <person name="Shigeta K."/>
            <person name="Senba T."/>
            <person name="Matsumura K."/>
            <person name="Nakajima Y."/>
            <person name="Mizuno T."/>
            <person name="Morinaga M."/>
            <person name="Sasaki M."/>
            <person name="Togashi T."/>
            <person name="Oyama M."/>
            <person name="Hata H."/>
            <person name="Watanabe M."/>
            <person name="Komatsu T."/>
            <person name="Mizushima-Sugano J."/>
            <person name="Satoh T."/>
            <person name="Shirai Y."/>
            <person name="Takahashi Y."/>
            <person name="Nakagawa K."/>
            <person name="Okumura K."/>
            <person name="Nagase T."/>
            <person name="Nomura N."/>
            <person name="Kikuchi H."/>
            <person name="Masuho Y."/>
            <person name="Yamashita R."/>
            <person name="Nakai K."/>
            <person name="Yada T."/>
            <person name="Nakamura Y."/>
            <person name="Ohara O."/>
            <person name="Isogai T."/>
            <person name="Sugano S."/>
        </authorList>
    </citation>
    <scope>NUCLEOTIDE SEQUENCE [LARGE SCALE MRNA]</scope>
    <source>
        <tissue>Cerebellum</tissue>
    </source>
</reference>
<reference key="4">
    <citation type="journal article" date="2001" name="Nature">
        <title>The DNA sequence and comparative analysis of human chromosome 20.</title>
        <authorList>
            <person name="Deloukas P."/>
            <person name="Matthews L.H."/>
            <person name="Ashurst J.L."/>
            <person name="Burton J."/>
            <person name="Gilbert J.G.R."/>
            <person name="Jones M."/>
            <person name="Stavrides G."/>
            <person name="Almeida J.P."/>
            <person name="Babbage A.K."/>
            <person name="Bagguley C.L."/>
            <person name="Bailey J."/>
            <person name="Barlow K.F."/>
            <person name="Bates K.N."/>
            <person name="Beard L.M."/>
            <person name="Beare D.M."/>
            <person name="Beasley O.P."/>
            <person name="Bird C.P."/>
            <person name="Blakey S.E."/>
            <person name="Bridgeman A.M."/>
            <person name="Brown A.J."/>
            <person name="Buck D."/>
            <person name="Burrill W.D."/>
            <person name="Butler A.P."/>
            <person name="Carder C."/>
            <person name="Carter N.P."/>
            <person name="Chapman J.C."/>
            <person name="Clamp M."/>
            <person name="Clark G."/>
            <person name="Clark L.N."/>
            <person name="Clark S.Y."/>
            <person name="Clee C.M."/>
            <person name="Clegg S."/>
            <person name="Cobley V.E."/>
            <person name="Collier R.E."/>
            <person name="Connor R.E."/>
            <person name="Corby N.R."/>
            <person name="Coulson A."/>
            <person name="Coville G.J."/>
            <person name="Deadman R."/>
            <person name="Dhami P.D."/>
            <person name="Dunn M."/>
            <person name="Ellington A.G."/>
            <person name="Frankland J.A."/>
            <person name="Fraser A."/>
            <person name="French L."/>
            <person name="Garner P."/>
            <person name="Grafham D.V."/>
            <person name="Griffiths C."/>
            <person name="Griffiths M.N.D."/>
            <person name="Gwilliam R."/>
            <person name="Hall R.E."/>
            <person name="Hammond S."/>
            <person name="Harley J.L."/>
            <person name="Heath P.D."/>
            <person name="Ho S."/>
            <person name="Holden J.L."/>
            <person name="Howden P.J."/>
            <person name="Huckle E."/>
            <person name="Hunt A.R."/>
            <person name="Hunt S.E."/>
            <person name="Jekosch K."/>
            <person name="Johnson C.M."/>
            <person name="Johnson D."/>
            <person name="Kay M.P."/>
            <person name="Kimberley A.M."/>
            <person name="King A."/>
            <person name="Knights A."/>
            <person name="Laird G.K."/>
            <person name="Lawlor S."/>
            <person name="Lehvaeslaiho M.H."/>
            <person name="Leversha M.A."/>
            <person name="Lloyd C."/>
            <person name="Lloyd D.M."/>
            <person name="Lovell J.D."/>
            <person name="Marsh V.L."/>
            <person name="Martin S.L."/>
            <person name="McConnachie L.J."/>
            <person name="McLay K."/>
            <person name="McMurray A.A."/>
            <person name="Milne S.A."/>
            <person name="Mistry D."/>
            <person name="Moore M.J.F."/>
            <person name="Mullikin J.C."/>
            <person name="Nickerson T."/>
            <person name="Oliver K."/>
            <person name="Parker A."/>
            <person name="Patel R."/>
            <person name="Pearce T.A.V."/>
            <person name="Peck A.I."/>
            <person name="Phillimore B.J.C.T."/>
            <person name="Prathalingam S.R."/>
            <person name="Plumb R.W."/>
            <person name="Ramsay H."/>
            <person name="Rice C.M."/>
            <person name="Ross M.T."/>
            <person name="Scott C.E."/>
            <person name="Sehra H.K."/>
            <person name="Shownkeen R."/>
            <person name="Sims S."/>
            <person name="Skuce C.D."/>
            <person name="Smith M.L."/>
            <person name="Soderlund C."/>
            <person name="Steward C.A."/>
            <person name="Sulston J.E."/>
            <person name="Swann R.M."/>
            <person name="Sycamore N."/>
            <person name="Taylor R."/>
            <person name="Tee L."/>
            <person name="Thomas D.W."/>
            <person name="Thorpe A."/>
            <person name="Tracey A."/>
            <person name="Tromans A.C."/>
            <person name="Vaudin M."/>
            <person name="Wall M."/>
            <person name="Wallis J.M."/>
            <person name="Whitehead S.L."/>
            <person name="Whittaker P."/>
            <person name="Willey D.L."/>
            <person name="Williams L."/>
            <person name="Williams S.A."/>
            <person name="Wilming L."/>
            <person name="Wray P.W."/>
            <person name="Hubbard T."/>
            <person name="Durbin R.M."/>
            <person name="Bentley D.R."/>
            <person name="Beck S."/>
            <person name="Rogers J."/>
        </authorList>
    </citation>
    <scope>NUCLEOTIDE SEQUENCE [LARGE SCALE GENOMIC DNA]</scope>
</reference>
<reference key="5">
    <citation type="journal article" date="2004" name="Genome Res.">
        <title>The status, quality, and expansion of the NIH full-length cDNA project: the Mammalian Gene Collection (MGC).</title>
        <authorList>
            <consortium name="The MGC Project Team"/>
        </authorList>
    </citation>
    <scope>NUCLEOTIDE SEQUENCE [LARGE SCALE MRNA]</scope>
    <source>
        <tissue>Brain</tissue>
        <tissue>Urinary bladder</tissue>
    </source>
</reference>
<reference key="6">
    <citation type="journal article" date="1997" name="Proc. Natl. Acad. Sci. U.S.A.">
        <title>Human and Saccharomyces cerevisiae dolichol phosphate mannose synthases represent two classes of the enzyme, but both function in Schizosaccharomyces pombe.</title>
        <authorList>
            <person name="Colussi P.A."/>
            <person name="Taron C.H."/>
            <person name="Mack J.C."/>
            <person name="Orlean P."/>
        </authorList>
    </citation>
    <scope>NUCLEOTIDE SEQUENCE [MRNA] OF 8-260</scope>
</reference>
<reference key="7">
    <citation type="journal article" date="2000" name="EMBO J.">
        <title>Human dolichol-phosphate-mannose synthase consists of three subunits, DPM1, DPM2 and DPM3.</title>
        <authorList>
            <person name="Maeda Y."/>
            <person name="Tanaka S."/>
            <person name="Hino J."/>
            <person name="Kangawa K."/>
            <person name="Kinoshita T."/>
        </authorList>
    </citation>
    <scope>SUBUNIT</scope>
    <scope>CATALYTIC ACTIVITY</scope>
    <scope>FUNCTION</scope>
    <scope>SUBCELLULAR LOCATION</scope>
</reference>
<reference key="8">
    <citation type="journal article" date="2006" name="Cell">
        <title>Global, in vivo, and site-specific phosphorylation dynamics in signaling networks.</title>
        <authorList>
            <person name="Olsen J.V."/>
            <person name="Blagoev B."/>
            <person name="Gnad F."/>
            <person name="Macek B."/>
            <person name="Kumar C."/>
            <person name="Mortensen P."/>
            <person name="Mann M."/>
        </authorList>
    </citation>
    <scope>IDENTIFICATION BY MASS SPECTROMETRY [LARGE SCALE ANALYSIS]</scope>
    <source>
        <tissue>Cervix carcinoma</tissue>
    </source>
</reference>
<reference key="9">
    <citation type="journal article" date="2006" name="J. Biol. Chem.">
        <title>DPM1, the catalytic subunit of dolichol-phosphate mannose synthase, is tethered to and stabilized on the endoplasmic reticulum membrane by DPM3.</title>
        <authorList>
            <person name="Ashida H."/>
            <person name="Maeda Y."/>
            <person name="Kinoshita T."/>
        </authorList>
    </citation>
    <scope>INTERACTION WITH DPM3</scope>
</reference>
<reference key="10">
    <citation type="journal article" date="2008" name="Mol. Cell">
        <title>Kinase-selective enrichment enables quantitative phosphoproteomics of the kinome across the cell cycle.</title>
        <authorList>
            <person name="Daub H."/>
            <person name="Olsen J.V."/>
            <person name="Bairlein M."/>
            <person name="Gnad F."/>
            <person name="Oppermann F.S."/>
            <person name="Korner R."/>
            <person name="Greff Z."/>
            <person name="Keri G."/>
            <person name="Stemmann O."/>
            <person name="Mann M."/>
        </authorList>
    </citation>
    <scope>IDENTIFICATION BY MASS SPECTROMETRY [LARGE SCALE ANALYSIS]</scope>
    <source>
        <tissue>Cervix carcinoma</tissue>
    </source>
</reference>
<reference key="11">
    <citation type="journal article" date="2010" name="Sci. Signal.">
        <title>Quantitative phosphoproteomics reveals widespread full phosphorylation site occupancy during mitosis.</title>
        <authorList>
            <person name="Olsen J.V."/>
            <person name="Vermeulen M."/>
            <person name="Santamaria A."/>
            <person name="Kumar C."/>
            <person name="Miller M.L."/>
            <person name="Jensen L.J."/>
            <person name="Gnad F."/>
            <person name="Cox J."/>
            <person name="Jensen T.S."/>
            <person name="Nigg E.A."/>
            <person name="Brunak S."/>
            <person name="Mann M."/>
        </authorList>
    </citation>
    <scope>ACETYLATION [LARGE SCALE ANALYSIS] AT ALA-2</scope>
    <scope>PHOSPHORYLATION [LARGE SCALE ANALYSIS] AT SER-9</scope>
    <scope>CLEAVAGE OF INITIATOR METHIONINE [LARGE SCALE ANALYSIS]</scope>
    <scope>IDENTIFICATION BY MASS SPECTROMETRY [LARGE SCALE ANALYSIS]</scope>
    <source>
        <tissue>Cervix carcinoma</tissue>
    </source>
</reference>
<reference key="12">
    <citation type="journal article" date="2011" name="BMC Syst. Biol.">
        <title>Initial characterization of the human central proteome.</title>
        <authorList>
            <person name="Burkard T.R."/>
            <person name="Planyavsky M."/>
            <person name="Kaupe I."/>
            <person name="Breitwieser F.P."/>
            <person name="Buerckstuemmer T."/>
            <person name="Bennett K.L."/>
            <person name="Superti-Furga G."/>
            <person name="Colinge J."/>
        </authorList>
    </citation>
    <scope>IDENTIFICATION BY MASS SPECTROMETRY [LARGE SCALE ANALYSIS]</scope>
</reference>
<reference key="13">
    <citation type="journal article" date="2011" name="Sci. Signal.">
        <title>System-wide temporal characterization of the proteome and phosphoproteome of human embryonic stem cell differentiation.</title>
        <authorList>
            <person name="Rigbolt K.T."/>
            <person name="Prokhorova T.A."/>
            <person name="Akimov V."/>
            <person name="Henningsen J."/>
            <person name="Johansen P.T."/>
            <person name="Kratchmarova I."/>
            <person name="Kassem M."/>
            <person name="Mann M."/>
            <person name="Olsen J.V."/>
            <person name="Blagoev B."/>
        </authorList>
    </citation>
    <scope>ACETYLATION [LARGE SCALE ANALYSIS] AT ALA-2</scope>
    <scope>PHOSPHORYLATION [LARGE SCALE ANALYSIS] AT SER-9</scope>
    <scope>CLEAVAGE OF INITIATOR METHIONINE [LARGE SCALE ANALYSIS]</scope>
    <scope>IDENTIFICATION BY MASS SPECTROMETRY [LARGE SCALE ANALYSIS]</scope>
</reference>
<reference key="14">
    <citation type="journal article" date="2012" name="Proc. Natl. Acad. Sci. U.S.A.">
        <title>N-terminal acetylome analyses and functional insights of the N-terminal acetyltransferase NatB.</title>
        <authorList>
            <person name="Van Damme P."/>
            <person name="Lasa M."/>
            <person name="Polevoda B."/>
            <person name="Gazquez C."/>
            <person name="Elosegui-Artola A."/>
            <person name="Kim D.S."/>
            <person name="De Juan-Pardo E."/>
            <person name="Demeyer K."/>
            <person name="Hole K."/>
            <person name="Larrea E."/>
            <person name="Timmerman E."/>
            <person name="Prieto J."/>
            <person name="Arnesen T."/>
            <person name="Sherman F."/>
            <person name="Gevaert K."/>
            <person name="Aldabe R."/>
        </authorList>
    </citation>
    <scope>ACETYLATION [LARGE SCALE ANALYSIS] AT ALA-2</scope>
    <scope>CLEAVAGE OF INITIATOR METHIONINE [LARGE SCALE ANALYSIS]</scope>
    <scope>IDENTIFICATION BY MASS SPECTROMETRY [LARGE SCALE ANALYSIS]</scope>
</reference>
<reference key="15">
    <citation type="journal article" date="2013" name="J. Proteome Res.">
        <title>Toward a comprehensive characterization of a human cancer cell phosphoproteome.</title>
        <authorList>
            <person name="Zhou H."/>
            <person name="Di Palma S."/>
            <person name="Preisinger C."/>
            <person name="Peng M."/>
            <person name="Polat A.N."/>
            <person name="Heck A.J."/>
            <person name="Mohammed S."/>
        </authorList>
    </citation>
    <scope>PHOSPHORYLATION [LARGE SCALE ANALYSIS] AT SER-3 AND SER-9</scope>
    <scope>IDENTIFICATION BY MASS SPECTROMETRY [LARGE SCALE ANALYSIS]</scope>
    <source>
        <tissue>Cervix carcinoma</tissue>
        <tissue>Erythroleukemia</tissue>
    </source>
</reference>
<reference key="16">
    <citation type="journal article" date="2014" name="J. Proteomics">
        <title>An enzyme assisted RP-RPLC approach for in-depth analysis of human liver phosphoproteome.</title>
        <authorList>
            <person name="Bian Y."/>
            <person name="Song C."/>
            <person name="Cheng K."/>
            <person name="Dong M."/>
            <person name="Wang F."/>
            <person name="Huang J."/>
            <person name="Sun D."/>
            <person name="Wang L."/>
            <person name="Ye M."/>
            <person name="Zou H."/>
        </authorList>
    </citation>
    <scope>IDENTIFICATION BY MASS SPECTROMETRY [LARGE SCALE ANALYSIS]</scope>
    <source>
        <tissue>Liver</tissue>
    </source>
</reference>
<reference key="17">
    <citation type="journal article" date="2015" name="Proteomics">
        <title>N-terminome analysis of the human mitochondrial proteome.</title>
        <authorList>
            <person name="Vaca Jacome A.S."/>
            <person name="Rabilloud T."/>
            <person name="Schaeffer-Reiss C."/>
            <person name="Rompais M."/>
            <person name="Ayoub D."/>
            <person name="Lane L."/>
            <person name="Bairoch A."/>
            <person name="Van Dorsselaer A."/>
            <person name="Carapito C."/>
        </authorList>
    </citation>
    <scope>IDENTIFICATION BY MASS SPECTROMETRY [LARGE SCALE ANALYSIS]</scope>
</reference>
<reference key="18">
    <citation type="journal article" date="2000" name="J. Clin. Invest.">
        <title>Dolichol phosphate mannose synthase (DPM1) mutations define congenital disorder of glycosylation Ie (CDG-Ie).</title>
        <authorList>
            <person name="Kim S."/>
            <person name="Westphal V."/>
            <person name="Srikrishna G."/>
            <person name="Mehta D.P."/>
            <person name="Peterson S."/>
            <person name="Filiano J."/>
            <person name="Karnes P.S."/>
            <person name="Patterson M.C."/>
            <person name="Freeze H.H."/>
        </authorList>
    </citation>
    <scope>VARIANT CDG1E GLY-92</scope>
</reference>
<reference key="19">
    <citation type="journal article" date="2000" name="J. Clin. Invest.">
        <title>Deficiency of dolichol-phosphate-mannose synthase-1 causes congenital disorder of glycosylation type Ie.</title>
        <authorList>
            <person name="Imbach T."/>
            <person name="Schenk B."/>
            <person name="Schollen E."/>
            <person name="Burda P."/>
            <person name="Stutz A."/>
            <person name="Gruenewald S."/>
            <person name="Bailie N.M."/>
            <person name="King M.D."/>
            <person name="Jaeken J."/>
            <person name="Matthijs G."/>
            <person name="Berger E.G."/>
            <person name="Aebi M."/>
            <person name="Hennet T."/>
        </authorList>
    </citation>
    <scope>VARIANT CDG1E GLY-92</scope>
</reference>
<reference key="20">
    <citation type="journal article" date="2004" name="J. Inherit. Metab. Dis.">
        <title>Congenital disorder of glycosylation (CDG) type Ie. A new patient.</title>
        <authorList>
            <person name="Garcia-Silva M.T."/>
            <person name="Matthijs G."/>
            <person name="Schollen E."/>
            <person name="Cabrera J.C."/>
            <person name="Sanchez Del Pozo J."/>
            <person name="Herreros M.M."/>
            <person name="Simon R."/>
            <person name="Maties M."/>
            <person name="Hernandez E.M."/>
            <person name="Hennet T."/>
            <person name="Briones P."/>
        </authorList>
    </citation>
    <scope>VARIANT CDG1E PRO-248</scope>
</reference>
<reference key="21">
    <citation type="journal article" date="2013" name="Mol. Genet. Metab.">
        <title>Congenital disorder of glycosylation due to DPM1 mutations presenting with dystroglycanopathy-type congenital muscular dystrophy.</title>
        <authorList>
            <person name="Yang A.C."/>
            <person name="Ng B.G."/>
            <person name="Moore S.A."/>
            <person name="Rush J."/>
            <person name="Waechter C.J."/>
            <person name="Raymond K.M."/>
            <person name="Willer T."/>
            <person name="Campbell K.P."/>
            <person name="Freeze H.H."/>
            <person name="Mehta L."/>
        </authorList>
    </citation>
    <scope>VARIANT CDG1E VAL-152</scope>
    <scope>CHARACTERIZATION OF VARIANT CDG1E VAL-152</scope>
</reference>
<reference key="22">
    <citation type="journal article" date="2009" name="Am. J. Hum. Genet.">
        <title>Deficiency of Dol-P-Man synthase subunit DPM3 bridges the congenital disorders of glycosylation with the dystroglycanopathies.</title>
        <authorList>
            <person name="Lefeber D.J."/>
            <person name="Schonberger J."/>
            <person name="Morava E."/>
            <person name="Guillard M."/>
            <person name="Huyben K.M."/>
            <person name="Verrijp K."/>
            <person name="Grafakou O."/>
            <person name="Evangeliou A."/>
            <person name="Preijers F.W."/>
            <person name="Manta P."/>
            <person name="Yildiz J."/>
            <person name="Grunewald S."/>
            <person name="Spilioti M."/>
            <person name="van den Elzen C."/>
            <person name="Klein D."/>
            <person name="Hess D."/>
            <person name="Ashida H."/>
            <person name="Hofsteenge J."/>
            <person name="Maeda Y."/>
            <person name="van den Heuvel L."/>
            <person name="Lammens M."/>
            <person name="Lehle L."/>
            <person name="Wevers R.A."/>
        </authorList>
    </citation>
    <scope>INTERACTION WITH DPM3</scope>
</reference>
<name>DPM1_HUMAN</name>
<keyword id="KW-0007">Acetylation</keyword>
<keyword id="KW-0900">Congenital disorder of glycosylation</keyword>
<keyword id="KW-0912">Congenital muscular dystrophy</keyword>
<keyword id="KW-0225">Disease variant</keyword>
<keyword id="KW-1215">Dystroglycanopathy</keyword>
<keyword id="KW-0256">Endoplasmic reticulum</keyword>
<keyword id="KW-0328">Glycosyltransferase</keyword>
<keyword id="KW-0460">Magnesium</keyword>
<keyword id="KW-0464">Manganese</keyword>
<keyword id="KW-0479">Metal-binding</keyword>
<keyword id="KW-0597">Phosphoprotein</keyword>
<keyword id="KW-1267">Proteomics identification</keyword>
<keyword id="KW-1185">Reference proteome</keyword>
<keyword id="KW-0808">Transferase</keyword>
<dbReference type="EC" id="2.4.1.83" evidence="10"/>
<dbReference type="EMBL" id="D86198">
    <property type="protein sequence ID" value="BAA25646.1"/>
    <property type="molecule type" value="mRNA"/>
</dbReference>
<dbReference type="EMBL" id="D86202">
    <property type="protein sequence ID" value="BAA25647.1"/>
    <property type="molecule type" value="Genomic_DNA"/>
</dbReference>
<dbReference type="EMBL" id="CR456926">
    <property type="protein sequence ID" value="CAG33207.1"/>
    <property type="molecule type" value="mRNA"/>
</dbReference>
<dbReference type="EMBL" id="AK289569">
    <property type="protein sequence ID" value="BAF82258.1"/>
    <property type="molecule type" value="mRNA"/>
</dbReference>
<dbReference type="EMBL" id="AL034553">
    <property type="status" value="NOT_ANNOTATED_CDS"/>
    <property type="molecule type" value="Genomic_DNA"/>
</dbReference>
<dbReference type="EMBL" id="BC007073">
    <property type="protein sequence ID" value="AAH07073.1"/>
    <property type="molecule type" value="mRNA"/>
</dbReference>
<dbReference type="EMBL" id="BC008466">
    <property type="protein sequence ID" value="AAH08466.1"/>
    <property type="molecule type" value="mRNA"/>
</dbReference>
<dbReference type="EMBL" id="BC016322">
    <property type="protein sequence ID" value="AAH16322.1"/>
    <property type="molecule type" value="mRNA"/>
</dbReference>
<dbReference type="EMBL" id="AF007875">
    <property type="protein sequence ID" value="AAC98797.1"/>
    <property type="molecule type" value="mRNA"/>
</dbReference>
<dbReference type="CCDS" id="CCDS13434.1"/>
<dbReference type="RefSeq" id="NP_001303963.1">
    <property type="nucleotide sequence ID" value="NM_001317034.1"/>
</dbReference>
<dbReference type="RefSeq" id="NP_001303964.1">
    <property type="nucleotide sequence ID" value="NM_001317035.1"/>
</dbReference>
<dbReference type="RefSeq" id="NP_001303965.1">
    <property type="nucleotide sequence ID" value="NM_001317036.1"/>
</dbReference>
<dbReference type="RefSeq" id="NP_003850.1">
    <property type="nucleotide sequence ID" value="NM_003859.3"/>
</dbReference>
<dbReference type="SMR" id="O60762"/>
<dbReference type="BioGRID" id="114340">
    <property type="interactions" value="189"/>
</dbReference>
<dbReference type="ComplexPortal" id="CPX-6268">
    <property type="entry name" value="Dolichol-phosphate mannosyltransferase complex"/>
</dbReference>
<dbReference type="CORUM" id="O60762"/>
<dbReference type="FunCoup" id="O60762">
    <property type="interactions" value="2691"/>
</dbReference>
<dbReference type="IntAct" id="O60762">
    <property type="interactions" value="82"/>
</dbReference>
<dbReference type="MINT" id="O60762"/>
<dbReference type="STRING" id="9606.ENSP00000360638"/>
<dbReference type="CAZy" id="GT2">
    <property type="family name" value="Glycosyltransferase Family 2"/>
</dbReference>
<dbReference type="GlyGen" id="O60762">
    <property type="glycosylation" value="3 sites, 1 O-linked glycan (1 site)"/>
</dbReference>
<dbReference type="iPTMnet" id="O60762"/>
<dbReference type="PhosphoSitePlus" id="O60762"/>
<dbReference type="SwissPalm" id="O60762"/>
<dbReference type="BioMuta" id="DPM1"/>
<dbReference type="jPOST" id="O60762"/>
<dbReference type="MassIVE" id="O60762"/>
<dbReference type="PaxDb" id="9606-ENSP00000360644"/>
<dbReference type="PeptideAtlas" id="O60762"/>
<dbReference type="ProteomicsDB" id="49589"/>
<dbReference type="Pumba" id="O60762"/>
<dbReference type="Antibodypedia" id="28594">
    <property type="antibodies" value="145 antibodies from 28 providers"/>
</dbReference>
<dbReference type="DNASU" id="8813"/>
<dbReference type="Ensembl" id="ENST00000371588.10">
    <property type="protein sequence ID" value="ENSP00000360644.5"/>
    <property type="gene ID" value="ENSG00000000419.14"/>
</dbReference>
<dbReference type="GeneID" id="8813"/>
<dbReference type="KEGG" id="hsa:8813"/>
<dbReference type="MANE-Select" id="ENST00000371588.10">
    <property type="protein sequence ID" value="ENSP00000360644.5"/>
    <property type="RefSeq nucleotide sequence ID" value="NM_003859.3"/>
    <property type="RefSeq protein sequence ID" value="NP_003850.1"/>
</dbReference>
<dbReference type="UCSC" id="uc002xvw.2">
    <property type="organism name" value="human"/>
</dbReference>
<dbReference type="AGR" id="HGNC:3005"/>
<dbReference type="CTD" id="8813"/>
<dbReference type="DisGeNET" id="8813"/>
<dbReference type="GeneCards" id="DPM1"/>
<dbReference type="GeneReviews" id="DPM1"/>
<dbReference type="HGNC" id="HGNC:3005">
    <property type="gene designation" value="DPM1"/>
</dbReference>
<dbReference type="HPA" id="ENSG00000000419">
    <property type="expression patterns" value="Low tissue specificity"/>
</dbReference>
<dbReference type="MalaCards" id="DPM1"/>
<dbReference type="MIM" id="603503">
    <property type="type" value="gene"/>
</dbReference>
<dbReference type="MIM" id="608799">
    <property type="type" value="phenotype"/>
</dbReference>
<dbReference type="neXtProt" id="NX_O60762"/>
<dbReference type="OpenTargets" id="ENSG00000000419"/>
<dbReference type="Orphanet" id="79322">
    <property type="disease" value="DPM1-CDG"/>
</dbReference>
<dbReference type="PharmGKB" id="PA27463"/>
<dbReference type="VEuPathDB" id="HostDB:ENSG00000000419"/>
<dbReference type="eggNOG" id="KOG2978">
    <property type="taxonomic scope" value="Eukaryota"/>
</dbReference>
<dbReference type="GeneTree" id="ENSGT00940000153481"/>
<dbReference type="HOGENOM" id="CLU_033536_13_3_1"/>
<dbReference type="InParanoid" id="O60762"/>
<dbReference type="OMA" id="KCFRREV"/>
<dbReference type="OrthoDB" id="2603at2759"/>
<dbReference type="PAN-GO" id="O60762">
    <property type="GO annotations" value="5 GO annotations based on evolutionary models"/>
</dbReference>
<dbReference type="PhylomeDB" id="O60762"/>
<dbReference type="TreeFam" id="TF105617"/>
<dbReference type="BioCyc" id="MetaCyc:ENSG00000000419-MONOMER"/>
<dbReference type="BRENDA" id="2.4.1.83">
    <property type="organism ID" value="2681"/>
</dbReference>
<dbReference type="PathwayCommons" id="O60762"/>
<dbReference type="Reactome" id="R-HSA-162699">
    <property type="pathway name" value="Synthesis of dolichyl-phosphate mannose"/>
</dbReference>
<dbReference type="Reactome" id="R-HSA-4717374">
    <property type="pathway name" value="Defective DPM1 causes DPM1-CDG"/>
</dbReference>
<dbReference type="Reactome" id="R-HSA-4719360">
    <property type="pathway name" value="Defective DPM3 causes DPM3-CDG"/>
</dbReference>
<dbReference type="Reactome" id="R-HSA-4719377">
    <property type="pathway name" value="Defective DPM2 causes DPM2-CDG"/>
</dbReference>
<dbReference type="SignaLink" id="O60762"/>
<dbReference type="SIGNOR" id="O60762"/>
<dbReference type="UniPathway" id="UPA00378"/>
<dbReference type="BioGRID-ORCS" id="8813">
    <property type="hits" value="108 hits in 1168 CRISPR screens"/>
</dbReference>
<dbReference type="ChiTaRS" id="DPM1">
    <property type="organism name" value="human"/>
</dbReference>
<dbReference type="GeneWiki" id="DPM1"/>
<dbReference type="GenomeRNAi" id="8813"/>
<dbReference type="Pharos" id="O60762">
    <property type="development level" value="Tbio"/>
</dbReference>
<dbReference type="PRO" id="PR:O60762"/>
<dbReference type="Proteomes" id="UP000005640">
    <property type="component" value="Chromosome 20"/>
</dbReference>
<dbReference type="RNAct" id="O60762">
    <property type="molecule type" value="protein"/>
</dbReference>
<dbReference type="Bgee" id="ENSG00000000419">
    <property type="expression patterns" value="Expressed in epithelium of nasopharynx and 215 other cell types or tissues"/>
</dbReference>
<dbReference type="ExpressionAtlas" id="O60762">
    <property type="expression patterns" value="baseline and differential"/>
</dbReference>
<dbReference type="GO" id="GO:0033185">
    <property type="term" value="C:dolichol-phosphate-mannose synthase complex"/>
    <property type="evidence" value="ECO:0000314"/>
    <property type="project" value="UniProtKB"/>
</dbReference>
<dbReference type="GO" id="GO:0005783">
    <property type="term" value="C:endoplasmic reticulum"/>
    <property type="evidence" value="ECO:0000314"/>
    <property type="project" value="MGI"/>
</dbReference>
<dbReference type="GO" id="GO:0005789">
    <property type="term" value="C:endoplasmic reticulum membrane"/>
    <property type="evidence" value="ECO:0000314"/>
    <property type="project" value="HGNC-UCL"/>
</dbReference>
<dbReference type="GO" id="GO:0016020">
    <property type="term" value="C:membrane"/>
    <property type="evidence" value="ECO:0000314"/>
    <property type="project" value="MGI"/>
</dbReference>
<dbReference type="GO" id="GO:0005634">
    <property type="term" value="C:nucleus"/>
    <property type="evidence" value="ECO:0007005"/>
    <property type="project" value="UniProtKB"/>
</dbReference>
<dbReference type="GO" id="GO:0043178">
    <property type="term" value="F:alcohol binding"/>
    <property type="evidence" value="ECO:0007669"/>
    <property type="project" value="Ensembl"/>
</dbReference>
<dbReference type="GO" id="GO:0005537">
    <property type="term" value="F:D-mannose binding"/>
    <property type="evidence" value="ECO:0007669"/>
    <property type="project" value="Ensembl"/>
</dbReference>
<dbReference type="GO" id="GO:0004582">
    <property type="term" value="F:dolichyl-phosphate beta-D-mannosyltransferase activity"/>
    <property type="evidence" value="ECO:0000314"/>
    <property type="project" value="UniProtKB"/>
</dbReference>
<dbReference type="GO" id="GO:0004169">
    <property type="term" value="F:dolichyl-phosphate-mannose-protein mannosyltransferase activity"/>
    <property type="evidence" value="ECO:0000314"/>
    <property type="project" value="HGNC-UCL"/>
</dbReference>
<dbReference type="GO" id="GO:0046872">
    <property type="term" value="F:metal ion binding"/>
    <property type="evidence" value="ECO:0000250"/>
    <property type="project" value="UniProtKB"/>
</dbReference>
<dbReference type="GO" id="GO:0019348">
    <property type="term" value="P:dolichol metabolic process"/>
    <property type="evidence" value="ECO:0000314"/>
    <property type="project" value="MGI"/>
</dbReference>
<dbReference type="GO" id="GO:0180047">
    <property type="term" value="P:dolichol phosphate mannose biosynthetic process"/>
    <property type="evidence" value="ECO:0000314"/>
    <property type="project" value="UniProtKB"/>
</dbReference>
<dbReference type="GO" id="GO:0006488">
    <property type="term" value="P:dolichol-linked oligosaccharide biosynthetic process"/>
    <property type="evidence" value="ECO:0000318"/>
    <property type="project" value="GO_Central"/>
</dbReference>
<dbReference type="GO" id="GO:0019673">
    <property type="term" value="P:GDP-mannose metabolic process"/>
    <property type="evidence" value="ECO:0007669"/>
    <property type="project" value="Ensembl"/>
</dbReference>
<dbReference type="GO" id="GO:0006506">
    <property type="term" value="P:GPI anchor biosynthetic process"/>
    <property type="evidence" value="ECO:0000314"/>
    <property type="project" value="HGNC-UCL"/>
</dbReference>
<dbReference type="GO" id="GO:0035268">
    <property type="term" value="P:protein mannosylation"/>
    <property type="evidence" value="ECO:0000314"/>
    <property type="project" value="HGNC-UCL"/>
</dbReference>
<dbReference type="GO" id="GO:0018279">
    <property type="term" value="P:protein N-linked glycosylation via asparagine"/>
    <property type="evidence" value="ECO:0000304"/>
    <property type="project" value="Reactome"/>
</dbReference>
<dbReference type="GO" id="GO:0035269">
    <property type="term" value="P:protein O-linked mannosylation"/>
    <property type="evidence" value="ECO:0000314"/>
    <property type="project" value="HGNC-UCL"/>
</dbReference>
<dbReference type="GO" id="GO:0070482">
    <property type="term" value="P:response to oxygen levels"/>
    <property type="evidence" value="ECO:0007669"/>
    <property type="project" value="Ensembl"/>
</dbReference>
<dbReference type="CDD" id="cd06442">
    <property type="entry name" value="DPM1_like"/>
    <property type="match status" value="1"/>
</dbReference>
<dbReference type="FunFam" id="3.90.550.10:FF:000036">
    <property type="entry name" value="Dolichol-phosphate mannosyltransferase subunit 1"/>
    <property type="match status" value="1"/>
</dbReference>
<dbReference type="Gene3D" id="3.90.550.10">
    <property type="entry name" value="Spore Coat Polysaccharide Biosynthesis Protein SpsA, Chain A"/>
    <property type="match status" value="1"/>
</dbReference>
<dbReference type="InterPro" id="IPR039528">
    <property type="entry name" value="DPM1-like"/>
</dbReference>
<dbReference type="InterPro" id="IPR001173">
    <property type="entry name" value="Glyco_trans_2-like"/>
</dbReference>
<dbReference type="InterPro" id="IPR029044">
    <property type="entry name" value="Nucleotide-diphossugar_trans"/>
</dbReference>
<dbReference type="PANTHER" id="PTHR43398">
    <property type="entry name" value="DOLICHOL-PHOSPHATE MANNOSYLTRANSFERASE SUBUNIT 1"/>
    <property type="match status" value="1"/>
</dbReference>
<dbReference type="PANTHER" id="PTHR43398:SF1">
    <property type="entry name" value="DOLICHOL-PHOSPHATE MANNOSYLTRANSFERASE SUBUNIT 1"/>
    <property type="match status" value="1"/>
</dbReference>
<dbReference type="Pfam" id="PF00535">
    <property type="entry name" value="Glycos_transf_2"/>
    <property type="match status" value="1"/>
</dbReference>
<dbReference type="SUPFAM" id="SSF53448">
    <property type="entry name" value="Nucleotide-diphospho-sugar transferases"/>
    <property type="match status" value="1"/>
</dbReference>
<organism>
    <name type="scientific">Homo sapiens</name>
    <name type="common">Human</name>
    <dbReference type="NCBI Taxonomy" id="9606"/>
    <lineage>
        <taxon>Eukaryota</taxon>
        <taxon>Metazoa</taxon>
        <taxon>Chordata</taxon>
        <taxon>Craniata</taxon>
        <taxon>Vertebrata</taxon>
        <taxon>Euteleostomi</taxon>
        <taxon>Mammalia</taxon>
        <taxon>Eutheria</taxon>
        <taxon>Euarchontoglires</taxon>
        <taxon>Primates</taxon>
        <taxon>Haplorrhini</taxon>
        <taxon>Catarrhini</taxon>
        <taxon>Hominidae</taxon>
        <taxon>Homo</taxon>
    </lineage>
</organism>
<accession>O60762</accession>
<accession>O15157</accession>
<accession>Q6IB78</accession>
<accession>Q96HK0</accession>
<evidence type="ECO:0000250" key="1">
    <source>
        <dbReference type="UniProtKB" id="Q8U4M3"/>
    </source>
</evidence>
<evidence type="ECO:0000269" key="2">
    <source>
    </source>
</evidence>
<evidence type="ECO:0000269" key="3">
    <source>
    </source>
</evidence>
<evidence type="ECO:0000269" key="4">
    <source>
    </source>
</evidence>
<evidence type="ECO:0000269" key="5">
    <source>
    </source>
</evidence>
<evidence type="ECO:0000269" key="6">
    <source>
    </source>
</evidence>
<evidence type="ECO:0000269" key="7">
    <source>
    </source>
</evidence>
<evidence type="ECO:0000269" key="8">
    <source>
    </source>
</evidence>
<evidence type="ECO:0000305" key="9"/>
<evidence type="ECO:0000305" key="10">
    <source>
    </source>
</evidence>
<evidence type="ECO:0007744" key="11">
    <source>
    </source>
</evidence>
<evidence type="ECO:0007744" key="12">
    <source>
    </source>
</evidence>
<evidence type="ECO:0007744" key="13">
    <source>
    </source>
</evidence>
<evidence type="ECO:0007744" key="14">
    <source>
    </source>
</evidence>
<feature type="initiator methionine" description="Removed" evidence="11 12 13">
    <location>
        <position position="1"/>
    </location>
</feature>
<feature type="chain" id="PRO_0000059170" description="Dolichol-phosphate mannosyltransferase subunit 1">
    <location>
        <begin position="2"/>
        <end position="260"/>
    </location>
</feature>
<feature type="binding site" evidence="1">
    <location>
        <position position="32"/>
    </location>
    <ligand>
        <name>GDP-alpha-D-mannose</name>
        <dbReference type="ChEBI" id="CHEBI:57527"/>
    </ligand>
</feature>
<feature type="binding site" evidence="1">
    <location>
        <position position="34"/>
    </location>
    <ligand>
        <name>GDP-alpha-D-mannose</name>
        <dbReference type="ChEBI" id="CHEBI:57527"/>
    </ligand>
</feature>
<feature type="binding site" evidence="1">
    <location>
        <position position="36"/>
    </location>
    <ligand>
        <name>GDP-alpha-D-mannose</name>
        <dbReference type="ChEBI" id="CHEBI:57527"/>
    </ligand>
</feature>
<feature type="binding site" evidence="1">
    <location>
        <position position="63"/>
    </location>
    <ligand>
        <name>GDP-alpha-D-mannose</name>
        <dbReference type="ChEBI" id="CHEBI:57527"/>
    </ligand>
</feature>
<feature type="binding site" evidence="1">
    <location>
        <position position="65"/>
    </location>
    <ligand>
        <name>GDP-alpha-D-mannose</name>
        <dbReference type="ChEBI" id="CHEBI:57527"/>
    </ligand>
</feature>
<feature type="binding site" evidence="1">
    <location>
        <position position="118"/>
    </location>
    <ligand>
        <name>GDP-alpha-D-mannose</name>
        <dbReference type="ChEBI" id="CHEBI:57527"/>
    </ligand>
</feature>
<feature type="binding site" evidence="1">
    <location>
        <position position="119"/>
    </location>
    <ligand>
        <name>GDP-alpha-D-mannose</name>
        <dbReference type="ChEBI" id="CHEBI:57527"/>
    </ligand>
</feature>
<feature type="binding site" evidence="1">
    <location>
        <position position="120"/>
    </location>
    <ligand>
        <name>GDP-alpha-D-mannose</name>
        <dbReference type="ChEBI" id="CHEBI:57527"/>
    </ligand>
</feature>
<feature type="binding site" evidence="1">
    <location>
        <position position="120"/>
    </location>
    <ligand>
        <name>Mg(2+)</name>
        <dbReference type="ChEBI" id="CHEBI:18420"/>
    </ligand>
</feature>
<feature type="binding site" evidence="1">
    <location>
        <position position="120"/>
    </location>
    <ligand>
        <name>Mn(2+)</name>
        <dbReference type="ChEBI" id="CHEBI:29035"/>
    </ligand>
</feature>
<feature type="binding site" evidence="1">
    <location>
        <position position="147"/>
    </location>
    <ligand>
        <name>GDP-alpha-D-mannose</name>
        <dbReference type="ChEBI" id="CHEBI:57527"/>
    </ligand>
</feature>
<feature type="binding site" evidence="1">
    <location>
        <position position="234"/>
    </location>
    <ligand>
        <name>GDP-alpha-D-mannose</name>
        <dbReference type="ChEBI" id="CHEBI:57527"/>
    </ligand>
</feature>
<feature type="binding site" evidence="1">
    <location>
        <position position="240"/>
    </location>
    <ligand>
        <name>GDP-alpha-D-mannose</name>
        <dbReference type="ChEBI" id="CHEBI:57527"/>
    </ligand>
</feature>
<feature type="modified residue" description="N-acetylalanine" evidence="11 12 13">
    <location>
        <position position="2"/>
    </location>
</feature>
<feature type="modified residue" description="Phosphoserine" evidence="14">
    <location>
        <position position="3"/>
    </location>
</feature>
<feature type="modified residue" description="Phosphoserine" evidence="11 12 14">
    <location>
        <position position="9"/>
    </location>
</feature>
<feature type="sequence variant" id="VAR_012341" description="In CDG1E; dbSNP:rs121908583." evidence="2 3">
    <original>R</original>
    <variation>G</variation>
    <location>
        <position position="92"/>
    </location>
</feature>
<feature type="sequence variant" id="VAR_070592" description="In CDG1E; abolishes interaction with DPM3; dbSNP:rs587777116." evidence="8">
    <original>G</original>
    <variation>V</variation>
    <location>
        <position position="152"/>
    </location>
</feature>
<feature type="sequence variant" id="VAR_019841" description="In CDG1E; dbSNP:rs587777114." evidence="5">
    <original>S</original>
    <variation>P</variation>
    <location>
        <position position="248"/>
    </location>
</feature>
<feature type="sequence conflict" description="In Ref. 5; AAH08466." evidence="9" ref="5">
    <original>S</original>
    <variation>G</variation>
    <location>
        <position position="9"/>
    </location>
</feature>
<feature type="sequence conflict" description="In Ref. 6; AAC98797." evidence="9" ref="6">
    <original>R</original>
    <variation>W</variation>
    <location>
        <position position="15"/>
    </location>
</feature>
<feature type="sequence conflict" description="In Ref. 6; AAC98797." evidence="9" ref="6">
    <original>Q</original>
    <variation>K</variation>
    <location>
        <position position="135"/>
    </location>
</feature>
<feature type="sequence conflict" description="In Ref. 6; AAC98797." evidence="9" ref="6">
    <original>V</original>
    <variation>A</variation>
    <location>
        <position position="143"/>
    </location>
</feature>
<feature type="sequence conflict" description="In Ref. 6; AAC98797." evidence="9" ref="6">
    <original>V</original>
    <variation>I</variation>
    <location>
        <position position="154"/>
    </location>
</feature>
<feature type="sequence conflict" description="In Ref. 6; AAC98797." evidence="9" ref="6">
    <original>R</original>
    <variation>T</variation>
    <location>
        <position position="177"/>
    </location>
</feature>
<feature type="sequence conflict" description="In Ref. 6; AAC98797." evidence="9" ref="6">
    <original>R</original>
    <variation>P</variation>
    <location>
        <position position="191"/>
    </location>
</feature>
<feature type="sequence conflict" description="In Ref. 5; AAH08466." evidence="9" ref="5">
    <original>L</original>
    <variation>M</variation>
    <location>
        <position position="220"/>
    </location>
</feature>